<comment type="function">
    <text evidence="2 3 4">Key component of the ribosome quality control system (RQC), a ribosome-associated complex that mediates the extraction of incompletely synthesized nascent chains from stalled ribosomes and their subsequent degradation (PubMed:33259811, PubMed:33259810, PubMed:34255840). RqcH recruits Ala-charged tRNA, and with RqcP directs the elongation of stalled nascent chains on 50S ribosomal subunits, leading to non-templated C-terminal alanine extensions (Ala tail) (PubMed:33259811, PubMed:33259810, PubMed:34255840). The Ala tail promotes nascent chain degradation (PubMed:34255840). RqcP is associated with the translocation-like movement of the peptidyl-tRNA from the A-site into the P-site (PubMed:33259811, PubMed:33259810). RqcH, RqcP and charged tRNA(Ala) are necessary and sufficient to add an Ala tail to a model stalled nascent peptide; does not add Val (PubMed:34255840).</text>
</comment>
<comment type="subunit">
    <text evidence="2 3 4">Associates with stalled 50S ribosomal subunits (PubMed:33259811, PubMed:33259810, PubMed:34255840). Binds to RqcH, 23S rRNA and the P-site tRNA (PubMed:33259811, PubMed:33259810, PubMed:34255840). Does not require RqcH for association with 50S subunits (PubMed:34255840). Crystallized 50S subunits are variously associated with an A/P-site tRNA with or without RqcH, as well as with P- and E-site tRNAs but no RqcH (PubMed:33259810). Displaced from the 50S subunit by puromycin but not thiostrepton (PubMed:34255840).</text>
</comment>
<comment type="disruption phenotype">
    <text evidence="2 3 4">Not essential; synthetic growth defects can be seen in double rqcP-ssrA mutants (PubMed:33259811, PubMed:33259810, PubMed:34255840). Double rqcH-rqcP deletion strains grow normally in rich media (PubMed:33259811). Loss of Ala tailing, RqcH is still recruited to the 50S ribosomal subunit (PubMed:33259811). In vivo mild decrease in tRNA(Ala)-binding by RqcH (PubMed:34255840).</text>
</comment>
<comment type="miscellaneous">
    <text evidence="3">Activity of this protein is best tested in a clpP or ssrA deletion mutant; ssrA (tmRNA) encodes the SsrA tag added to nascent proteins in stalled ribosomes by trans-translation, which targets the nascent protein for degradation.</text>
</comment>
<comment type="similarity">
    <text evidence="1">Belongs to the RqcP family.</text>
</comment>
<sequence length="86" mass="9719">MRLDKFLKVSRLIKRRTLAKEVADQGRISINGNQAKASSDVKPGDELTVRFGQKLVTVQVNELKDTTKKEEAANMYTILKEEKLGE</sequence>
<protein>
    <recommendedName>
        <fullName evidence="1 5 6">RQC P-site tRNA stabilizing factor</fullName>
        <shortName evidence="1 5 6">RqcP</shortName>
    </recommendedName>
    <alternativeName>
        <fullName evidence="6">Hsp15</fullName>
    </alternativeName>
    <alternativeName>
        <fullName evidence="1">Ribosome-associated protein quality control protein P</fullName>
    </alternativeName>
</protein>
<feature type="chain" id="PRO_0000201746" description="RQC P-site tRNA stabilizing factor">
    <location>
        <begin position="1"/>
        <end position="86"/>
    </location>
</feature>
<feature type="domain" description="S4 RNA-binding" evidence="1">
    <location>
        <begin position="1"/>
        <end position="62"/>
    </location>
</feature>
<feature type="mutagenesis site" description="Synthetic growth defect with ssrA deletion, no longer associates with 50S ribosomal subunit." evidence="4">
    <original>R</original>
    <variation>A</variation>
    <location>
        <position position="2"/>
    </location>
</feature>
<feature type="mutagenesis site" description="No longer associates with 50S subunit. Synthetic growth defect with ssrA deletion; when associated with 68-AA-69." evidence="4">
    <original>R</original>
    <variation>A</variation>
    <location>
        <position position="11"/>
    </location>
</feature>
<feature type="mutagenesis site" description="Synthetic growth defect with ssrA deletion, loss of interaction with 50S subunit, loss of Ala tailing in vitro." evidence="2 4">
    <original>R</original>
    <variation>A</variation>
    <location>
        <position position="16"/>
    </location>
</feature>
<feature type="mutagenesis site" description="No longer associates with 50S subunit. Synthetic growth defect with ssrA deletion; when associated with A-11." evidence="4">
    <original>KK</original>
    <variation>AA</variation>
    <location>
        <begin position="68"/>
        <end position="69"/>
    </location>
</feature>
<feature type="helix" evidence="12">
    <location>
        <begin position="3"/>
        <end position="9"/>
    </location>
</feature>
<feature type="strand" evidence="12">
    <location>
        <begin position="12"/>
        <end position="14"/>
    </location>
</feature>
<feature type="helix" evidence="12">
    <location>
        <begin position="16"/>
        <end position="25"/>
    </location>
</feature>
<feature type="strand" evidence="13">
    <location>
        <begin position="28"/>
        <end position="30"/>
    </location>
</feature>
<feature type="strand" evidence="12">
    <location>
        <begin position="46"/>
        <end position="51"/>
    </location>
</feature>
<feature type="strand" evidence="12">
    <location>
        <begin position="54"/>
        <end position="60"/>
    </location>
</feature>
<feature type="helix" evidence="12">
    <location>
        <begin position="69"/>
        <end position="72"/>
    </location>
</feature>
<feature type="helix" evidence="12">
    <location>
        <begin position="73"/>
        <end position="75"/>
    </location>
</feature>
<feature type="strand" evidence="12">
    <location>
        <begin position="76"/>
        <end position="82"/>
    </location>
</feature>
<keyword id="KW-0002">3D-structure</keyword>
<keyword id="KW-0648">Protein biosynthesis</keyword>
<keyword id="KW-1185">Reference proteome</keyword>
<keyword id="KW-0694">RNA-binding</keyword>
<keyword id="KW-0699">rRNA-binding</keyword>
<keyword id="KW-0820">tRNA-binding</keyword>
<proteinExistence type="evidence at protein level"/>
<reference key="1">
    <citation type="journal article" date="1994" name="DNA Res.">
        <title>Systematic sequencing of the 180 kilobase region of the Bacillus subtilis chromosome containing the replication origin.</title>
        <authorList>
            <person name="Ogasawara N."/>
            <person name="Nakai S."/>
            <person name="Yoshikawa H."/>
        </authorList>
    </citation>
    <scope>NUCLEOTIDE SEQUENCE [GENOMIC DNA]</scope>
    <source>
        <strain>168</strain>
    </source>
</reference>
<reference key="2">
    <citation type="journal article" date="1997" name="Nature">
        <title>The complete genome sequence of the Gram-positive bacterium Bacillus subtilis.</title>
        <authorList>
            <person name="Kunst F."/>
            <person name="Ogasawara N."/>
            <person name="Moszer I."/>
            <person name="Albertini A.M."/>
            <person name="Alloni G."/>
            <person name="Azevedo V."/>
            <person name="Bertero M.G."/>
            <person name="Bessieres P."/>
            <person name="Bolotin A."/>
            <person name="Borchert S."/>
            <person name="Borriss R."/>
            <person name="Boursier L."/>
            <person name="Brans A."/>
            <person name="Braun M."/>
            <person name="Brignell S.C."/>
            <person name="Bron S."/>
            <person name="Brouillet S."/>
            <person name="Bruschi C.V."/>
            <person name="Caldwell B."/>
            <person name="Capuano V."/>
            <person name="Carter N.M."/>
            <person name="Choi S.-K."/>
            <person name="Codani J.-J."/>
            <person name="Connerton I.F."/>
            <person name="Cummings N.J."/>
            <person name="Daniel R.A."/>
            <person name="Denizot F."/>
            <person name="Devine K.M."/>
            <person name="Duesterhoeft A."/>
            <person name="Ehrlich S.D."/>
            <person name="Emmerson P.T."/>
            <person name="Entian K.-D."/>
            <person name="Errington J."/>
            <person name="Fabret C."/>
            <person name="Ferrari E."/>
            <person name="Foulger D."/>
            <person name="Fritz C."/>
            <person name="Fujita M."/>
            <person name="Fujita Y."/>
            <person name="Fuma S."/>
            <person name="Galizzi A."/>
            <person name="Galleron N."/>
            <person name="Ghim S.-Y."/>
            <person name="Glaser P."/>
            <person name="Goffeau A."/>
            <person name="Golightly E.J."/>
            <person name="Grandi G."/>
            <person name="Guiseppi G."/>
            <person name="Guy B.J."/>
            <person name="Haga K."/>
            <person name="Haiech J."/>
            <person name="Harwood C.R."/>
            <person name="Henaut A."/>
            <person name="Hilbert H."/>
            <person name="Holsappel S."/>
            <person name="Hosono S."/>
            <person name="Hullo M.-F."/>
            <person name="Itaya M."/>
            <person name="Jones L.-M."/>
            <person name="Joris B."/>
            <person name="Karamata D."/>
            <person name="Kasahara Y."/>
            <person name="Klaerr-Blanchard M."/>
            <person name="Klein C."/>
            <person name="Kobayashi Y."/>
            <person name="Koetter P."/>
            <person name="Koningstein G."/>
            <person name="Krogh S."/>
            <person name="Kumano M."/>
            <person name="Kurita K."/>
            <person name="Lapidus A."/>
            <person name="Lardinois S."/>
            <person name="Lauber J."/>
            <person name="Lazarevic V."/>
            <person name="Lee S.-M."/>
            <person name="Levine A."/>
            <person name="Liu H."/>
            <person name="Masuda S."/>
            <person name="Mauel C."/>
            <person name="Medigue C."/>
            <person name="Medina N."/>
            <person name="Mellado R.P."/>
            <person name="Mizuno M."/>
            <person name="Moestl D."/>
            <person name="Nakai S."/>
            <person name="Noback M."/>
            <person name="Noone D."/>
            <person name="O'Reilly M."/>
            <person name="Ogawa K."/>
            <person name="Ogiwara A."/>
            <person name="Oudega B."/>
            <person name="Park S.-H."/>
            <person name="Parro V."/>
            <person name="Pohl T.M."/>
            <person name="Portetelle D."/>
            <person name="Porwollik S."/>
            <person name="Prescott A.M."/>
            <person name="Presecan E."/>
            <person name="Pujic P."/>
            <person name="Purnelle B."/>
            <person name="Rapoport G."/>
            <person name="Rey M."/>
            <person name="Reynolds S."/>
            <person name="Rieger M."/>
            <person name="Rivolta C."/>
            <person name="Rocha E."/>
            <person name="Roche B."/>
            <person name="Rose M."/>
            <person name="Sadaie Y."/>
            <person name="Sato T."/>
            <person name="Scanlan E."/>
            <person name="Schleich S."/>
            <person name="Schroeter R."/>
            <person name="Scoffone F."/>
            <person name="Sekiguchi J."/>
            <person name="Sekowska A."/>
            <person name="Seror S.J."/>
            <person name="Serror P."/>
            <person name="Shin B.-S."/>
            <person name="Soldo B."/>
            <person name="Sorokin A."/>
            <person name="Tacconi E."/>
            <person name="Takagi T."/>
            <person name="Takahashi H."/>
            <person name="Takemaru K."/>
            <person name="Takeuchi M."/>
            <person name="Tamakoshi A."/>
            <person name="Tanaka T."/>
            <person name="Terpstra P."/>
            <person name="Tognoni A."/>
            <person name="Tosato V."/>
            <person name="Uchiyama S."/>
            <person name="Vandenbol M."/>
            <person name="Vannier F."/>
            <person name="Vassarotti A."/>
            <person name="Viari A."/>
            <person name="Wambutt R."/>
            <person name="Wedler E."/>
            <person name="Wedler H."/>
            <person name="Weitzenegger T."/>
            <person name="Winters P."/>
            <person name="Wipat A."/>
            <person name="Yamamoto H."/>
            <person name="Yamane K."/>
            <person name="Yasumoto K."/>
            <person name="Yata K."/>
            <person name="Yoshida K."/>
            <person name="Yoshikawa H.-F."/>
            <person name="Zumstein E."/>
            <person name="Yoshikawa H."/>
            <person name="Danchin A."/>
        </authorList>
    </citation>
    <scope>NUCLEOTIDE SEQUENCE [LARGE SCALE GENOMIC DNA]</scope>
    <source>
        <strain>168</strain>
    </source>
</reference>
<reference evidence="8" key="3">
    <citation type="journal article" date="2021" name="Mol. Cell">
        <title>Mimicry of Canonical Translation Elongation Underlies Alanine Tail Synthesis in RQC.</title>
        <authorList>
            <person name="Filbeck S."/>
            <person name="Cerullo F."/>
            <person name="Paternoga H."/>
            <person name="Tsaprailis G."/>
            <person name="Joazeiro C.A.P."/>
            <person name="Pfeffer S."/>
        </authorList>
    </citation>
    <scope>STRUCTURE BY ELECTRON MICROSCOPY (2.99 ANGSTROMS) IN COMPLEX WITH 50S RIBOSOMAL SUBUNIT</scope>
    <scope>IDENTIFICATION BY MASS SPECTROMETRY</scope>
    <scope>FUNCTION</scope>
    <scope>SUBUNIT</scope>
    <scope>DISRUPTION PHENOTYPE</scope>
    <scope>RRNA-BINDING</scope>
    <scope>TRNA-BINDING</scope>
    <source>
        <strain>168</strain>
    </source>
</reference>
<reference evidence="9 10" key="4">
    <citation type="journal article" date="2021" name="Mol. Cell">
        <title>Structural Basis for Bacterial Ribosome-Associated Quality Control by RqcH and RqcP.</title>
        <authorList>
            <person name="Crowe-McAuliffe C."/>
            <person name="Takada H."/>
            <person name="Murina V."/>
            <person name="Polte C."/>
            <person name="Kasvandik S."/>
            <person name="Tenson T."/>
            <person name="Ignatova Z."/>
            <person name="Atkinson G.C."/>
            <person name="Wilson D.N."/>
            <person name="Hauryliuk V."/>
        </authorList>
    </citation>
    <scope>STRUCTURE BY ELECTRON MICROSCOPY (2.90 ANGSTROMS) IN COMPLEX WITH 50S RIBOSOMAL SUBUNIT</scope>
    <scope>IDENTIFICATION BY MASS SPECTROMETRY</scope>
    <scope>FUNCTION</scope>
    <scope>SUBUNIT</scope>
    <scope>DISRUPTION PHENOTYPE</scope>
    <scope>RRNA-BINDING</scope>
    <scope>TRNA-BINDING</scope>
    <scope>MUTAGENESIS OF ARG-16</scope>
    <source>
        <strain>168</strain>
    </source>
</reference>
<reference evidence="11" key="5">
    <citation type="journal article" date="2021" name="Nucleic Acids Res.">
        <title>RqcH and RqcP catalyze processive poly-alanine synthesis in a reconstituted ribosome-associated quality control system.</title>
        <authorList>
            <person name="Takada H."/>
            <person name="Crowe-McAuliffe C."/>
            <person name="Polte C."/>
            <person name="Sidorova Z.Y."/>
            <person name="Murina V."/>
            <person name="Atkinson G.C."/>
            <person name="Konevega A.L."/>
            <person name="Ignatova Z."/>
            <person name="Wilson D.N."/>
            <person name="Hauryliuk V."/>
        </authorList>
    </citation>
    <scope>STRUCTURE BY ELECTRON MICROSCOPY (3.20 ANGSTROMS) IN COMPLEX WITH 50S RIBOSOMAL SUBUNIT</scope>
    <scope>FUNCTION</scope>
    <scope>DISRUPTION PHENOTYPE</scope>
    <scope>RRNA-BINDING</scope>
    <scope>TRNA-BINDING</scope>
    <scope>MUTAGENESIS OF ARG-2; ARG-11; ARG-16 AND 68-LYS-LYS-69</scope>
    <source>
        <strain>168</strain>
    </source>
</reference>
<accession>P37557</accession>
<organism>
    <name type="scientific">Bacillus subtilis (strain 168)</name>
    <dbReference type="NCBI Taxonomy" id="224308"/>
    <lineage>
        <taxon>Bacteria</taxon>
        <taxon>Bacillati</taxon>
        <taxon>Bacillota</taxon>
        <taxon>Bacilli</taxon>
        <taxon>Bacillales</taxon>
        <taxon>Bacillaceae</taxon>
        <taxon>Bacillus</taxon>
    </lineage>
</organism>
<evidence type="ECO:0000255" key="1">
    <source>
        <dbReference type="HAMAP-Rule" id="MF_00871"/>
    </source>
</evidence>
<evidence type="ECO:0000269" key="2">
    <source>
    </source>
</evidence>
<evidence type="ECO:0000269" key="3">
    <source>
    </source>
</evidence>
<evidence type="ECO:0000269" key="4">
    <source>
    </source>
</evidence>
<evidence type="ECO:0000303" key="5">
    <source>
    </source>
</evidence>
<evidence type="ECO:0000303" key="6">
    <source>
    </source>
</evidence>
<evidence type="ECO:0000303" key="7">
    <source>
    </source>
</evidence>
<evidence type="ECO:0007744" key="8">
    <source>
        <dbReference type="PDB" id="7AQC"/>
    </source>
</evidence>
<evidence type="ECO:0007744" key="9">
    <source>
        <dbReference type="PDB" id="7AS8"/>
    </source>
</evidence>
<evidence type="ECO:0007744" key="10">
    <source>
        <dbReference type="PDB" id="7ASA"/>
    </source>
</evidence>
<evidence type="ECO:0007744" key="11">
    <source>
        <dbReference type="PDB" id="7OPE"/>
    </source>
</evidence>
<evidence type="ECO:0007829" key="12">
    <source>
        <dbReference type="PDB" id="7AS8"/>
    </source>
</evidence>
<evidence type="ECO:0007829" key="13">
    <source>
        <dbReference type="PDB" id="7ASA"/>
    </source>
</evidence>
<dbReference type="EMBL" id="D26185">
    <property type="protein sequence ID" value="BAA05294.1"/>
    <property type="molecule type" value="Genomic_DNA"/>
</dbReference>
<dbReference type="EMBL" id="AL009126">
    <property type="protein sequence ID" value="CAB11835.1"/>
    <property type="molecule type" value="Genomic_DNA"/>
</dbReference>
<dbReference type="PIR" id="S66089">
    <property type="entry name" value="S66089"/>
</dbReference>
<dbReference type="RefSeq" id="WP_003226716.1">
    <property type="nucleotide sequence ID" value="NZ_OZ025638.1"/>
</dbReference>
<dbReference type="PDB" id="7AQC">
    <property type="method" value="EM"/>
    <property type="resolution" value="2.99 A"/>
    <property type="chains" value="Y=1-86"/>
</dbReference>
<dbReference type="PDB" id="7AS8">
    <property type="method" value="EM"/>
    <property type="resolution" value="2.90 A"/>
    <property type="chains" value="1=1-86"/>
</dbReference>
<dbReference type="PDB" id="7ASA">
    <property type="method" value="EM"/>
    <property type="resolution" value="3.50 A"/>
    <property type="chains" value="1=1-86"/>
</dbReference>
<dbReference type="PDB" id="7OPE">
    <property type="method" value="EM"/>
    <property type="resolution" value="3.20 A"/>
    <property type="chains" value="1=1-86"/>
</dbReference>
<dbReference type="PDBsum" id="7AQC"/>
<dbReference type="PDBsum" id="7AS8"/>
<dbReference type="PDBsum" id="7ASA"/>
<dbReference type="PDBsum" id="7OPE"/>
<dbReference type="EMDB" id="EMD-11862"/>
<dbReference type="EMDB" id="EMD-11889"/>
<dbReference type="EMDB" id="EMD-11891"/>
<dbReference type="EMDB" id="EMD-13017"/>
<dbReference type="SMR" id="P37557"/>
<dbReference type="FunCoup" id="P37557">
    <property type="interactions" value="33"/>
</dbReference>
<dbReference type="STRING" id="224308.BSU00590"/>
<dbReference type="PaxDb" id="224308-BSU00590"/>
<dbReference type="EnsemblBacteria" id="CAB11835">
    <property type="protein sequence ID" value="CAB11835"/>
    <property type="gene ID" value="BSU_00590"/>
</dbReference>
<dbReference type="GeneID" id="936800"/>
<dbReference type="KEGG" id="bsu:BSU00590"/>
<dbReference type="PATRIC" id="fig|224308.179.peg.59"/>
<dbReference type="eggNOG" id="COG1188">
    <property type="taxonomic scope" value="Bacteria"/>
</dbReference>
<dbReference type="InParanoid" id="P37557"/>
<dbReference type="OrthoDB" id="9805210at2"/>
<dbReference type="PhylomeDB" id="P37557"/>
<dbReference type="BioCyc" id="BSUB:BSU00590-MONOMER"/>
<dbReference type="Proteomes" id="UP000001570">
    <property type="component" value="Chromosome"/>
</dbReference>
<dbReference type="GO" id="GO:1990112">
    <property type="term" value="C:RQC complex"/>
    <property type="evidence" value="ECO:0000314"/>
    <property type="project" value="UniProtKB"/>
</dbReference>
<dbReference type="GO" id="GO:0019843">
    <property type="term" value="F:rRNA binding"/>
    <property type="evidence" value="ECO:0000314"/>
    <property type="project" value="UniProtKB"/>
</dbReference>
<dbReference type="GO" id="GO:0000049">
    <property type="term" value="F:tRNA binding"/>
    <property type="evidence" value="ECO:0000314"/>
    <property type="project" value="UniProtKB"/>
</dbReference>
<dbReference type="GO" id="GO:0072344">
    <property type="term" value="P:rescue of stalled ribosome"/>
    <property type="evidence" value="ECO:0000314"/>
    <property type="project" value="UniProtKB"/>
</dbReference>
<dbReference type="CDD" id="cd00165">
    <property type="entry name" value="S4"/>
    <property type="match status" value="1"/>
</dbReference>
<dbReference type="Gene3D" id="3.10.290.10">
    <property type="entry name" value="RNA-binding S4 domain"/>
    <property type="match status" value="1"/>
</dbReference>
<dbReference type="HAMAP" id="MF_00871">
    <property type="entry name" value="RqcP"/>
    <property type="match status" value="1"/>
</dbReference>
<dbReference type="InterPro" id="IPR025490">
    <property type="entry name" value="RqcP"/>
</dbReference>
<dbReference type="InterPro" id="IPR002942">
    <property type="entry name" value="S4_RNA-bd"/>
</dbReference>
<dbReference type="InterPro" id="IPR036986">
    <property type="entry name" value="S4_RNA-bd_sf"/>
</dbReference>
<dbReference type="Pfam" id="PF01479">
    <property type="entry name" value="S4"/>
    <property type="match status" value="1"/>
</dbReference>
<dbReference type="PIRSF" id="PIRSF038881">
    <property type="entry name" value="RNAbp_HP1423"/>
    <property type="match status" value="1"/>
</dbReference>
<dbReference type="SMART" id="SM00363">
    <property type="entry name" value="S4"/>
    <property type="match status" value="1"/>
</dbReference>
<dbReference type="SUPFAM" id="SSF55174">
    <property type="entry name" value="Alpha-L RNA-binding motif"/>
    <property type="match status" value="1"/>
</dbReference>
<dbReference type="PROSITE" id="PS50889">
    <property type="entry name" value="S4"/>
    <property type="match status" value="1"/>
</dbReference>
<name>RQCP_BACSU</name>
<gene>
    <name evidence="1 5 6" type="primary">rqcP</name>
    <name evidence="7" type="synonym">yabO</name>
    <name type="ordered locus">BSU00590</name>
</gene>